<keyword id="KW-0256">Endoplasmic reticulum</keyword>
<keyword id="KW-0325">Glycoprotein</keyword>
<keyword id="KW-0472">Membrane</keyword>
<keyword id="KW-1185">Reference proteome</keyword>
<keyword id="KW-0812">Transmembrane</keyword>
<keyword id="KW-1133">Transmembrane helix</keyword>
<reference key="1">
    <citation type="journal article" date="2013" name="BMC Genomics">
        <title>Genome sequence and analysis of methylotrophic yeast Hansenula polymorpha DL1.</title>
        <authorList>
            <person name="Ravin N.V."/>
            <person name="Eldarov M.A."/>
            <person name="Kadnikov V.V."/>
            <person name="Beletsky A.V."/>
            <person name="Schneider J."/>
            <person name="Mardanova E.S."/>
            <person name="Smekalova E.M."/>
            <person name="Zvereva M.I."/>
            <person name="Dontsova O.A."/>
            <person name="Mardanov A.V."/>
            <person name="Skryabin K.G."/>
        </authorList>
    </citation>
    <scope>NUCLEOTIDE SEQUENCE [LARGE SCALE GENOMIC DNA]</scope>
    <source>
        <strain>ATCC 26012 / BCRC 20466 / JCM 22074 / NRRL Y-7560 / DL-1</strain>
    </source>
</reference>
<reference key="2">
    <citation type="journal article" date="2020" name="J. Cell Sci.">
        <title>Pex24 and Pex32 are required to tether peroxisomes to the ER for organelle biogenesis, positioning and segregation in yeast.</title>
        <authorList>
            <person name="Wu F."/>
            <person name="de Boer R."/>
            <person name="Krikken A.M."/>
            <person name="Aksit A."/>
            <person name="Bordin N."/>
            <person name="Devos D.P."/>
            <person name="van der Klei I.J."/>
        </authorList>
    </citation>
    <scope>DISRUPTION PHENOTYPE</scope>
    <scope>SUBCELLULAR LOCATION</scope>
</reference>
<reference key="3">
    <citation type="journal article" date="2024" name="Biol. Open">
        <title>Hansenula polymorpha cells lacking the ER-localized peroxins Pex23 or Pex29 show defects in mitochondrial function and morphology.</title>
        <authorList>
            <person name="Chen H."/>
            <person name="de Boer R."/>
            <person name="Krikken A.M."/>
            <person name="Wu F."/>
            <person name="van der Klei I."/>
        </authorList>
    </citation>
    <scope>FUNCTION</scope>
    <scope>DISRUPTION PHENOTYPE</scope>
</reference>
<name>PEX23_OGAPD</name>
<evidence type="ECO:0000255" key="1"/>
<evidence type="ECO:0000255" key="2">
    <source>
        <dbReference type="PROSITE-ProRule" id="PRU00498"/>
    </source>
</evidence>
<evidence type="ECO:0000256" key="3">
    <source>
        <dbReference type="SAM" id="MobiDB-lite"/>
    </source>
</evidence>
<evidence type="ECO:0000269" key="4">
    <source>
    </source>
</evidence>
<evidence type="ECO:0000269" key="5">
    <source>
    </source>
</evidence>
<evidence type="ECO:0000303" key="6">
    <source>
    </source>
</evidence>
<evidence type="ECO:0000305" key="7"/>
<comment type="function">
    <text evidence="5">With PEX29, contributes to the formation of endoplasmic reticulum-mitochondria junctions which are important for mitochondrial function (PubMed:38682287). Involved in lipid dropplets formation (PubMed:38682287).</text>
</comment>
<comment type="subcellular location">
    <subcellularLocation>
        <location evidence="4">Endoplasmic reticulum membrane</location>
        <topology evidence="1">Multi-pass membrane protein</topology>
    </subcellularLocation>
    <text evidence="4">Localizes to multiple regions of the ER and accumulates at nuclear-vacuolar junctions (NVJs).</text>
</comment>
<comment type="disruption phenotype">
    <text evidence="4 5">Results in aberrant peroxisome formation (PubMed:32665322). Reduces the number of lipid droplets and leads to fragmented and clustered mitochondria (PubMed:38682287). Also results in retarded growth and reduced mitochondrial activities (PubMed:38682287).</text>
</comment>
<comment type="similarity">
    <text evidence="7">Belongs to the PEX28-32 family. PEX32 subfamily.</text>
</comment>
<feature type="chain" id="PRO_0000461712" description="Peroxisomal membrane protein PEX23">
    <location>
        <begin position="1"/>
        <end position="521"/>
    </location>
</feature>
<feature type="transmembrane region" description="Helical" evidence="1">
    <location>
        <begin position="111"/>
        <end position="128"/>
    </location>
</feature>
<feature type="transmembrane region" description="Helical" evidence="1">
    <location>
        <begin position="133"/>
        <end position="150"/>
    </location>
</feature>
<feature type="transmembrane region" description="Helical" evidence="1">
    <location>
        <begin position="198"/>
        <end position="217"/>
    </location>
</feature>
<feature type="region of interest" description="Disordered" evidence="3">
    <location>
        <begin position="1"/>
        <end position="26"/>
    </location>
</feature>
<feature type="region of interest" description="Disordered" evidence="3">
    <location>
        <begin position="425"/>
        <end position="446"/>
    </location>
</feature>
<feature type="region of interest" description="Disordered" evidence="3">
    <location>
        <begin position="465"/>
        <end position="486"/>
    </location>
</feature>
<feature type="compositionally biased region" description="Polar residues" evidence="3">
    <location>
        <begin position="429"/>
        <end position="446"/>
    </location>
</feature>
<feature type="glycosylation site" description="N-linked (GlcNAc...) asparagine" evidence="2">
    <location>
        <position position="23"/>
    </location>
</feature>
<feature type="glycosylation site" description="N-linked (GlcNAc...) asparagine" evidence="2">
    <location>
        <position position="53"/>
    </location>
</feature>
<feature type="glycosylation site" description="N-linked (GlcNAc...) asparagine" evidence="2">
    <location>
        <position position="189"/>
    </location>
</feature>
<feature type="glycosylation site" description="N-linked (GlcNAc...) asparagine" evidence="2">
    <location>
        <position position="279"/>
    </location>
</feature>
<feature type="glycosylation site" description="N-linked (GlcNAc...) asparagine" evidence="2">
    <location>
        <position position="463"/>
    </location>
</feature>
<feature type="glycosylation site" description="N-linked (GlcNAc...) asparagine" evidence="2">
    <location>
        <position position="467"/>
    </location>
</feature>
<protein>
    <recommendedName>
        <fullName evidence="6">Peroxisomal membrane protein PEX23</fullName>
    </recommendedName>
    <alternativeName>
        <fullName evidence="7">Peroxin-23</fullName>
    </alternativeName>
</protein>
<gene>
    <name evidence="6" type="primary">PEX23</name>
    <name type="ORF">HPODL_01523</name>
</gene>
<sequence length="521" mass="58079">MPTDPNSNPVSKAGLTPSSINSNISEVQPTTGLNTINAAAGVKVKETENLRANFTAKSSLPAGSEITCTPQSSPLLSSTPPTVSKSLIKAYPYLIALNKILGVLTWTDDTSYISVLLVTTATLFILYFENFVIYLGHLSIVGLIFLYSIFRSYVEKEQKKSPTLDDVVHCLTTVSVRADMLLFPVSSLNLTSADLRRLLFTSIFLSPGYILVCYLLFPPKTLLLILVIFFLTYHSSWSRVTRKLLWRSSIVRAFCFYNTGLIFESGNNEKSSLFKTAMNKTNKKLKEVTRKAGGKHSGPVRFTYVLYENQRRWLGVGWTPNLLSYERTPWTDEFLNEAESPDNFELPQLNDDSGMYWRWIDKTWRLDLTNDGALQLPSSKYKTTADPKPDEGFIYYDNTWKNPSTEDSFSKYTRRRRWIRTAELVSPGDDSSTDSASLPHSASETVGLTLPKSTSISDVQSVNASGNITTSAETAPDSAGTAKKRKSLRFDATSTVYEEGVSDLKNVKETLEGGATDKKEE</sequence>
<accession>W1QAK2</accession>
<proteinExistence type="inferred from homology"/>
<dbReference type="EMBL" id="AEOI02000009">
    <property type="protein sequence ID" value="ESW97424.1"/>
    <property type="molecule type" value="Genomic_DNA"/>
</dbReference>
<dbReference type="RefSeq" id="XP_013933509.1">
    <property type="nucleotide sequence ID" value="XM_014078034.1"/>
</dbReference>
<dbReference type="STRING" id="871575.W1QAK2"/>
<dbReference type="GeneID" id="25770984"/>
<dbReference type="KEGG" id="opa:HPODL_01523"/>
<dbReference type="eggNOG" id="ENOG502QT80">
    <property type="taxonomic scope" value="Eukaryota"/>
</dbReference>
<dbReference type="HOGENOM" id="CLU_016397_0_1_1"/>
<dbReference type="OMA" id="PPFYILT"/>
<dbReference type="OrthoDB" id="5586090at2759"/>
<dbReference type="Proteomes" id="UP000008673">
    <property type="component" value="Chromosome VI"/>
</dbReference>
<dbReference type="GO" id="GO:0005789">
    <property type="term" value="C:endoplasmic reticulum membrane"/>
    <property type="evidence" value="ECO:0007669"/>
    <property type="project" value="UniProtKB-SubCell"/>
</dbReference>
<dbReference type="GO" id="GO:0005778">
    <property type="term" value="C:peroxisomal membrane"/>
    <property type="evidence" value="ECO:0007669"/>
    <property type="project" value="TreeGrafter"/>
</dbReference>
<dbReference type="GO" id="GO:0007031">
    <property type="term" value="P:peroxisome organization"/>
    <property type="evidence" value="ECO:0007669"/>
    <property type="project" value="UniProtKB-ARBA"/>
</dbReference>
<dbReference type="InterPro" id="IPR006614">
    <property type="entry name" value="Peroxin/Ferlin"/>
</dbReference>
<dbReference type="InterPro" id="IPR052646">
    <property type="entry name" value="Peroxisomal_PEX28-32"/>
</dbReference>
<dbReference type="InterPro" id="IPR010482">
    <property type="entry name" value="TECPR1-like_DysF"/>
</dbReference>
<dbReference type="PANTHER" id="PTHR31679">
    <property type="entry name" value="PEROXISOMAL MEMBRANE PROTEIN PEX30-RELATED"/>
    <property type="match status" value="1"/>
</dbReference>
<dbReference type="PANTHER" id="PTHR31679:SF2">
    <property type="entry name" value="PEROXISOMAL MEMBRANE PROTEIN PEX30-RELATED"/>
    <property type="match status" value="1"/>
</dbReference>
<dbReference type="Pfam" id="PF06398">
    <property type="entry name" value="Pex24p"/>
    <property type="match status" value="1"/>
</dbReference>
<dbReference type="SMART" id="SM00694">
    <property type="entry name" value="DysFC"/>
    <property type="match status" value="1"/>
</dbReference>
<dbReference type="SMART" id="SM00693">
    <property type="entry name" value="DysFN"/>
    <property type="match status" value="1"/>
</dbReference>
<organism>
    <name type="scientific">Ogataea parapolymorpha (strain ATCC 26012 / BCRC 20466 / JCM 22074 / NRRL Y-7560 / DL-1)</name>
    <name type="common">Yeast</name>
    <name type="synonym">Hansenula polymorpha</name>
    <dbReference type="NCBI Taxonomy" id="871575"/>
    <lineage>
        <taxon>Eukaryota</taxon>
        <taxon>Fungi</taxon>
        <taxon>Dikarya</taxon>
        <taxon>Ascomycota</taxon>
        <taxon>Saccharomycotina</taxon>
        <taxon>Pichiomycetes</taxon>
        <taxon>Pichiales</taxon>
        <taxon>Pichiaceae</taxon>
        <taxon>Ogataea</taxon>
    </lineage>
</organism>